<gene>
    <name evidence="1" type="primary">upp</name>
    <name type="ordered locus">NMC0727</name>
</gene>
<sequence length="208" mass="22740">MNVNVINHPLVRHKLTLMREADCSTYKFRTLAIELARLMAYEASRDFEIEKYLIDGWCGQIEGDRIKGKTLTVVPILRAGLGMLDGVLDLIPTAKISVVGLQRDEETLKPVSYFEKFVDSMDERPALIIDPMLATGGSMVATIDLLKAKGCKNIKALVLVAAPEGVKAVNDAHPDVTIYTAALDSHLNENGYIIPGLGDAGDKIFGTR</sequence>
<reference key="1">
    <citation type="journal article" date="2007" name="PLoS Genet.">
        <title>Meningococcal genetic variation mechanisms viewed through comparative analysis of serogroup C strain FAM18.</title>
        <authorList>
            <person name="Bentley S.D."/>
            <person name="Vernikos G.S."/>
            <person name="Snyder L.A.S."/>
            <person name="Churcher C."/>
            <person name="Arrowsmith C."/>
            <person name="Chillingworth T."/>
            <person name="Cronin A."/>
            <person name="Davis P.H."/>
            <person name="Holroyd N.E."/>
            <person name="Jagels K."/>
            <person name="Maddison M."/>
            <person name="Moule S."/>
            <person name="Rabbinowitsch E."/>
            <person name="Sharp S."/>
            <person name="Unwin L."/>
            <person name="Whitehead S."/>
            <person name="Quail M.A."/>
            <person name="Achtman M."/>
            <person name="Barrell B.G."/>
            <person name="Saunders N.J."/>
            <person name="Parkhill J."/>
        </authorList>
    </citation>
    <scope>NUCLEOTIDE SEQUENCE [LARGE SCALE GENOMIC DNA]</scope>
    <source>
        <strain>ATCC 700532 / DSM 15464 / FAM18</strain>
    </source>
</reference>
<comment type="function">
    <text evidence="1">Catalyzes the conversion of uracil and 5-phospho-alpha-D-ribose 1-diphosphate (PRPP) to UMP and diphosphate.</text>
</comment>
<comment type="catalytic activity">
    <reaction evidence="1">
        <text>UMP + diphosphate = 5-phospho-alpha-D-ribose 1-diphosphate + uracil</text>
        <dbReference type="Rhea" id="RHEA:13017"/>
        <dbReference type="ChEBI" id="CHEBI:17568"/>
        <dbReference type="ChEBI" id="CHEBI:33019"/>
        <dbReference type="ChEBI" id="CHEBI:57865"/>
        <dbReference type="ChEBI" id="CHEBI:58017"/>
        <dbReference type="EC" id="2.4.2.9"/>
    </reaction>
</comment>
<comment type="cofactor">
    <cofactor evidence="1">
        <name>Mg(2+)</name>
        <dbReference type="ChEBI" id="CHEBI:18420"/>
    </cofactor>
    <text evidence="1">Binds 1 Mg(2+) ion per subunit. The magnesium is bound as Mg-PRPP.</text>
</comment>
<comment type="activity regulation">
    <text evidence="1">Allosterically activated by GTP.</text>
</comment>
<comment type="pathway">
    <text evidence="1">Pyrimidine metabolism; UMP biosynthesis via salvage pathway; UMP from uracil: step 1/1.</text>
</comment>
<comment type="similarity">
    <text evidence="1">Belongs to the UPRTase family.</text>
</comment>
<evidence type="ECO:0000255" key="1">
    <source>
        <dbReference type="HAMAP-Rule" id="MF_01218"/>
    </source>
</evidence>
<keyword id="KW-0021">Allosteric enzyme</keyword>
<keyword id="KW-0328">Glycosyltransferase</keyword>
<keyword id="KW-0342">GTP-binding</keyword>
<keyword id="KW-0460">Magnesium</keyword>
<keyword id="KW-0547">Nucleotide-binding</keyword>
<keyword id="KW-0808">Transferase</keyword>
<name>UPP_NEIMF</name>
<organism>
    <name type="scientific">Neisseria meningitidis serogroup C / serotype 2a (strain ATCC 700532 / DSM 15464 / FAM18)</name>
    <dbReference type="NCBI Taxonomy" id="272831"/>
    <lineage>
        <taxon>Bacteria</taxon>
        <taxon>Pseudomonadati</taxon>
        <taxon>Pseudomonadota</taxon>
        <taxon>Betaproteobacteria</taxon>
        <taxon>Neisseriales</taxon>
        <taxon>Neisseriaceae</taxon>
        <taxon>Neisseria</taxon>
    </lineage>
</organism>
<protein>
    <recommendedName>
        <fullName evidence="1">Uracil phosphoribosyltransferase</fullName>
        <ecNumber evidence="1">2.4.2.9</ecNumber>
    </recommendedName>
    <alternativeName>
        <fullName evidence="1">UMP pyrophosphorylase</fullName>
    </alternativeName>
    <alternativeName>
        <fullName evidence="1">UPRTase</fullName>
    </alternativeName>
</protein>
<proteinExistence type="inferred from homology"/>
<feature type="chain" id="PRO_1000053749" description="Uracil phosphoribosyltransferase">
    <location>
        <begin position="1"/>
        <end position="208"/>
    </location>
</feature>
<feature type="binding site" evidence="1">
    <location>
        <position position="78"/>
    </location>
    <ligand>
        <name>5-phospho-alpha-D-ribose 1-diphosphate</name>
        <dbReference type="ChEBI" id="CHEBI:58017"/>
    </ligand>
</feature>
<feature type="binding site" evidence="1">
    <location>
        <position position="103"/>
    </location>
    <ligand>
        <name>5-phospho-alpha-D-ribose 1-diphosphate</name>
        <dbReference type="ChEBI" id="CHEBI:58017"/>
    </ligand>
</feature>
<feature type="binding site" evidence="1">
    <location>
        <begin position="130"/>
        <end position="138"/>
    </location>
    <ligand>
        <name>5-phospho-alpha-D-ribose 1-diphosphate</name>
        <dbReference type="ChEBI" id="CHEBI:58017"/>
    </ligand>
</feature>
<feature type="binding site" evidence="1">
    <location>
        <position position="193"/>
    </location>
    <ligand>
        <name>uracil</name>
        <dbReference type="ChEBI" id="CHEBI:17568"/>
    </ligand>
</feature>
<feature type="binding site" evidence="1">
    <location>
        <begin position="198"/>
        <end position="200"/>
    </location>
    <ligand>
        <name>uracil</name>
        <dbReference type="ChEBI" id="CHEBI:17568"/>
    </ligand>
</feature>
<feature type="binding site" evidence="1">
    <location>
        <position position="199"/>
    </location>
    <ligand>
        <name>5-phospho-alpha-D-ribose 1-diphosphate</name>
        <dbReference type="ChEBI" id="CHEBI:58017"/>
    </ligand>
</feature>
<dbReference type="EC" id="2.4.2.9" evidence="1"/>
<dbReference type="EMBL" id="AM421808">
    <property type="protein sequence ID" value="CAM10016.1"/>
    <property type="molecule type" value="Genomic_DNA"/>
</dbReference>
<dbReference type="RefSeq" id="WP_002214002.1">
    <property type="nucleotide sequence ID" value="NC_008767.1"/>
</dbReference>
<dbReference type="SMR" id="A1KT34"/>
<dbReference type="GeneID" id="93386397"/>
<dbReference type="KEGG" id="nmc:NMC0727"/>
<dbReference type="HOGENOM" id="CLU_067096_2_2_4"/>
<dbReference type="UniPathway" id="UPA00574">
    <property type="reaction ID" value="UER00636"/>
</dbReference>
<dbReference type="Proteomes" id="UP000002286">
    <property type="component" value="Chromosome"/>
</dbReference>
<dbReference type="GO" id="GO:0005525">
    <property type="term" value="F:GTP binding"/>
    <property type="evidence" value="ECO:0007669"/>
    <property type="project" value="UniProtKB-KW"/>
</dbReference>
<dbReference type="GO" id="GO:0000287">
    <property type="term" value="F:magnesium ion binding"/>
    <property type="evidence" value="ECO:0007669"/>
    <property type="project" value="UniProtKB-UniRule"/>
</dbReference>
<dbReference type="GO" id="GO:0004845">
    <property type="term" value="F:uracil phosphoribosyltransferase activity"/>
    <property type="evidence" value="ECO:0007669"/>
    <property type="project" value="UniProtKB-UniRule"/>
</dbReference>
<dbReference type="GO" id="GO:0044206">
    <property type="term" value="P:UMP salvage"/>
    <property type="evidence" value="ECO:0007669"/>
    <property type="project" value="UniProtKB-UniRule"/>
</dbReference>
<dbReference type="GO" id="GO:0006223">
    <property type="term" value="P:uracil salvage"/>
    <property type="evidence" value="ECO:0007669"/>
    <property type="project" value="InterPro"/>
</dbReference>
<dbReference type="CDD" id="cd06223">
    <property type="entry name" value="PRTases_typeI"/>
    <property type="match status" value="1"/>
</dbReference>
<dbReference type="FunFam" id="3.40.50.2020:FF:000003">
    <property type="entry name" value="Uracil phosphoribosyltransferase"/>
    <property type="match status" value="1"/>
</dbReference>
<dbReference type="Gene3D" id="3.40.50.2020">
    <property type="match status" value="1"/>
</dbReference>
<dbReference type="HAMAP" id="MF_01218_B">
    <property type="entry name" value="Upp_B"/>
    <property type="match status" value="1"/>
</dbReference>
<dbReference type="InterPro" id="IPR000836">
    <property type="entry name" value="PRibTrfase_dom"/>
</dbReference>
<dbReference type="InterPro" id="IPR029057">
    <property type="entry name" value="PRTase-like"/>
</dbReference>
<dbReference type="InterPro" id="IPR034332">
    <property type="entry name" value="Upp_B"/>
</dbReference>
<dbReference type="InterPro" id="IPR050054">
    <property type="entry name" value="UPRTase/APRTase"/>
</dbReference>
<dbReference type="InterPro" id="IPR005765">
    <property type="entry name" value="Ura_phspho_trans"/>
</dbReference>
<dbReference type="NCBIfam" id="NF001097">
    <property type="entry name" value="PRK00129.1"/>
    <property type="match status" value="1"/>
</dbReference>
<dbReference type="NCBIfam" id="TIGR01091">
    <property type="entry name" value="upp"/>
    <property type="match status" value="1"/>
</dbReference>
<dbReference type="PANTHER" id="PTHR32315">
    <property type="entry name" value="ADENINE PHOSPHORIBOSYLTRANSFERASE"/>
    <property type="match status" value="1"/>
</dbReference>
<dbReference type="PANTHER" id="PTHR32315:SF4">
    <property type="entry name" value="URACIL PHOSPHORIBOSYLTRANSFERASE, CHLOROPLASTIC"/>
    <property type="match status" value="1"/>
</dbReference>
<dbReference type="Pfam" id="PF14681">
    <property type="entry name" value="UPRTase"/>
    <property type="match status" value="1"/>
</dbReference>
<dbReference type="SUPFAM" id="SSF53271">
    <property type="entry name" value="PRTase-like"/>
    <property type="match status" value="1"/>
</dbReference>
<accession>A1KT34</accession>